<name>PEX31_ARATH</name>
<proteinExistence type="evidence at transcript level"/>
<keyword id="KW-0025">Alternative splicing</keyword>
<keyword id="KW-0175">Coiled coil</keyword>
<keyword id="KW-0472">Membrane</keyword>
<keyword id="KW-0576">Peroxisome</keyword>
<keyword id="KW-0962">Peroxisome biogenesis</keyword>
<keyword id="KW-0653">Protein transport</keyword>
<keyword id="KW-1185">Reference proteome</keyword>
<keyword id="KW-0812">Transmembrane</keyword>
<keyword id="KW-1133">Transmembrane helix</keyword>
<keyword id="KW-0813">Transport</keyword>
<reference key="1">
    <citation type="journal article" date="2000" name="DNA Res.">
        <title>Structural analysis of Arabidopsis thaliana chromosome 3. II. Sequence features of the 4,251,695 bp regions covered by 90 P1, TAC and BAC clones.</title>
        <authorList>
            <person name="Kaneko T."/>
            <person name="Katoh T."/>
            <person name="Sato S."/>
            <person name="Nakamura Y."/>
            <person name="Asamizu E."/>
            <person name="Tabata S."/>
        </authorList>
    </citation>
    <scope>NUCLEOTIDE SEQUENCE [LARGE SCALE GENOMIC DNA]</scope>
</reference>
<reference key="2">
    <citation type="journal article" date="2017" name="Plant J.">
        <title>Araport11: a complete reannotation of the Arabidopsis thaliana reference genome.</title>
        <authorList>
            <person name="Cheng C.Y."/>
            <person name="Krishnakumar V."/>
            <person name="Chan A.P."/>
            <person name="Thibaud-Nissen F."/>
            <person name="Schobel S."/>
            <person name="Town C.D."/>
        </authorList>
    </citation>
    <scope>GENOME REANNOTATION</scope>
    <source>
        <strain>cv. Columbia</strain>
    </source>
</reference>
<reference key="3">
    <citation type="submission" date="2002-03" db="EMBL/GenBank/DDBJ databases">
        <title>Full-length cDNA from Arabidopsis thaliana.</title>
        <authorList>
            <person name="Brover V.V."/>
            <person name="Troukhan M.E."/>
            <person name="Alexandrov N.A."/>
            <person name="Lu Y.-P."/>
            <person name="Flavell R.B."/>
            <person name="Feldmann K.A."/>
        </authorList>
    </citation>
    <scope>NUCLEOTIDE SEQUENCE [LARGE SCALE MRNA] (ISOFORM 1)</scope>
</reference>
<reference key="4">
    <citation type="journal article" date="2007" name="Plant Cell Physiol.">
        <title>Functional classification of Arabidopsis peroxisome biogenesis factors proposed from analyses of knockdown mutants.</title>
        <authorList>
            <person name="Nito K."/>
            <person name="Kamigaki A."/>
            <person name="Kondo M."/>
            <person name="Hayashi M."/>
            <person name="Nishimura M."/>
        </authorList>
    </citation>
    <scope>FUNCTION</scope>
    <scope>IDENTIFICATION</scope>
</reference>
<evidence type="ECO:0000250" key="1"/>
<evidence type="ECO:0000255" key="2"/>
<evidence type="ECO:0000269" key="3">
    <source>
    </source>
</evidence>
<evidence type="ECO:0000305" key="4"/>
<sequence length="358" mass="40680">MDLVRGLWRKHRRKILVTTTCLGSGYLLYKLYNAHTRKLADLERELANERENDEIIKTQMKAHFDNIQMIADTTTLPHAIHHLSSRVVEEIDVSSIMDKLSKGKGILIPSEKLQLWNELKILSFTRMVLSLWSVTMLSLYIRVQVNILGRHLYIDTARGLGSSHLLDELDLIERDDEQKFLTSADFLATSGMPSLISNMQNAVKEVLKGKQLKDVLTTSALRETVMRILDVFMSTGSPHHWVDYLMMSQDATTDVSSSDATVTKFHLLITETREVLTSNDFSNVAEISLKCCAVALVEEMETQTGLATGMQLAKLLPQIEKTMPEISAEPEKNRFLQLIRDLPEVKLFFTLLYANMPQ</sequence>
<protein>
    <recommendedName>
        <fullName>Peroxisome biogenesis protein 3-1</fullName>
    </recommendedName>
    <alternativeName>
        <fullName>Peroxin-3-1</fullName>
        <shortName>AtPEX3-1</shortName>
    </alternativeName>
</protein>
<feature type="chain" id="PRO_0000404527" description="Peroxisome biogenesis protein 3-1">
    <location>
        <begin position="1"/>
        <end position="358"/>
    </location>
</feature>
<feature type="transmembrane region" description="Helical" evidence="2">
    <location>
        <begin position="15"/>
        <end position="32"/>
    </location>
</feature>
<feature type="coiled-coil region" evidence="2">
    <location>
        <begin position="33"/>
        <end position="62"/>
    </location>
</feature>
<feature type="sequence conflict" description="In Ref. 3; AAM63222." evidence="4" ref="3">
    <original>T</original>
    <variation>A</variation>
    <location>
        <position position="277"/>
    </location>
</feature>
<organism>
    <name type="scientific">Arabidopsis thaliana</name>
    <name type="common">Mouse-ear cress</name>
    <dbReference type="NCBI Taxonomy" id="3702"/>
    <lineage>
        <taxon>Eukaryota</taxon>
        <taxon>Viridiplantae</taxon>
        <taxon>Streptophyta</taxon>
        <taxon>Embryophyta</taxon>
        <taxon>Tracheophyta</taxon>
        <taxon>Spermatophyta</taxon>
        <taxon>Magnoliopsida</taxon>
        <taxon>eudicotyledons</taxon>
        <taxon>Gunneridae</taxon>
        <taxon>Pentapetalae</taxon>
        <taxon>rosids</taxon>
        <taxon>malvids</taxon>
        <taxon>Brassicales</taxon>
        <taxon>Brassicaceae</taxon>
        <taxon>Camelineae</taxon>
        <taxon>Arabidopsis</taxon>
    </lineage>
</organism>
<comment type="function">
    <text evidence="3">Involved in morphology determination of peroxisomes, but not in import of peroxisomal matrix proteins. May act as a docking factor for PEX19 and be necessary for the import of peroxisomal membrane proteins in the peroxisomes.</text>
</comment>
<comment type="subcellular location">
    <subcellularLocation>
        <location evidence="1">Peroxisome membrane</location>
        <topology evidence="1">Single-pass membrane protein</topology>
    </subcellularLocation>
</comment>
<comment type="alternative products">
    <event type="alternative splicing"/>
    <isoform>
        <id>Q8LDG7-1</id>
        <name>1</name>
        <sequence type="displayed"/>
    </isoform>
    <text>A number of isoforms are produced. According to EST sequences.</text>
</comment>
<comment type="similarity">
    <text evidence="4">Belongs to the peroxin-3 family.</text>
</comment>
<comment type="sequence caution" evidence="4">
    <conflict type="erroneous gene model prediction">
        <sequence resource="EMBL-CDS" id="BAB02028"/>
    </conflict>
</comment>
<accession>Q8LDG7</accession>
<accession>Q9LV25</accession>
<gene>
    <name type="primary">PEX3-1</name>
    <name type="ordered locus">At3g18160</name>
    <name type="ORF">MRC8.15</name>
</gene>
<dbReference type="EMBL" id="AB020749">
    <property type="protein sequence ID" value="BAB02028.1"/>
    <property type="status" value="ALT_SEQ"/>
    <property type="molecule type" value="Genomic_DNA"/>
</dbReference>
<dbReference type="EMBL" id="CP002686">
    <property type="protein sequence ID" value="AEE76056.1"/>
    <property type="molecule type" value="Genomic_DNA"/>
</dbReference>
<dbReference type="EMBL" id="AY086013">
    <property type="protein sequence ID" value="AAM63222.1"/>
    <property type="molecule type" value="mRNA"/>
</dbReference>
<dbReference type="RefSeq" id="NP_566598.1">
    <molecule id="Q8LDG7-1"/>
    <property type="nucleotide sequence ID" value="NM_112698.4"/>
</dbReference>
<dbReference type="SMR" id="Q8LDG7"/>
<dbReference type="BioGRID" id="6675">
    <property type="interactions" value="2"/>
</dbReference>
<dbReference type="FunCoup" id="Q8LDG7">
    <property type="interactions" value="3265"/>
</dbReference>
<dbReference type="STRING" id="3702.Q8LDG7"/>
<dbReference type="iPTMnet" id="Q8LDG7"/>
<dbReference type="PaxDb" id="3702-AT3G18160.3"/>
<dbReference type="ProteomicsDB" id="251076">
    <molecule id="Q8LDG7-1"/>
</dbReference>
<dbReference type="EnsemblPlants" id="AT3G18160.1">
    <molecule id="Q8LDG7-1"/>
    <property type="protein sequence ID" value="AT3G18160.1"/>
    <property type="gene ID" value="AT3G18160"/>
</dbReference>
<dbReference type="GeneID" id="821342"/>
<dbReference type="Gramene" id="AT3G18160.1">
    <molecule id="Q8LDG7-1"/>
    <property type="protein sequence ID" value="AT3G18160.1"/>
    <property type="gene ID" value="AT3G18160"/>
</dbReference>
<dbReference type="KEGG" id="ath:AT3G18160"/>
<dbReference type="Araport" id="AT3G18160"/>
<dbReference type="TAIR" id="AT3G18160">
    <property type="gene designation" value="PEX3-1"/>
</dbReference>
<dbReference type="eggNOG" id="KOG4444">
    <property type="taxonomic scope" value="Eukaryota"/>
</dbReference>
<dbReference type="HOGENOM" id="CLU_041367_1_0_1"/>
<dbReference type="InParanoid" id="Q8LDG7"/>
<dbReference type="OMA" id="FTRTVCA"/>
<dbReference type="OrthoDB" id="45930at2759"/>
<dbReference type="PhylomeDB" id="Q8LDG7"/>
<dbReference type="PRO" id="PR:Q8LDG7"/>
<dbReference type="Proteomes" id="UP000006548">
    <property type="component" value="Chromosome 3"/>
</dbReference>
<dbReference type="ExpressionAtlas" id="Q8LDG7">
    <property type="expression patterns" value="baseline and differential"/>
</dbReference>
<dbReference type="GO" id="GO:0005778">
    <property type="term" value="C:peroxisomal membrane"/>
    <property type="evidence" value="ECO:0007669"/>
    <property type="project" value="UniProtKB-SubCell"/>
</dbReference>
<dbReference type="GO" id="GO:0007031">
    <property type="term" value="P:peroxisome organization"/>
    <property type="evidence" value="ECO:0007669"/>
    <property type="project" value="UniProtKB-KW"/>
</dbReference>
<dbReference type="GO" id="GO:0015031">
    <property type="term" value="P:protein transport"/>
    <property type="evidence" value="ECO:0007669"/>
    <property type="project" value="UniProtKB-KW"/>
</dbReference>
<dbReference type="InterPro" id="IPR006966">
    <property type="entry name" value="Peroxin-3"/>
</dbReference>
<dbReference type="PANTHER" id="PTHR28080">
    <property type="entry name" value="PEROXISOMAL BIOGENESIS FACTOR 3"/>
    <property type="match status" value="1"/>
</dbReference>
<dbReference type="PANTHER" id="PTHR28080:SF2">
    <property type="entry name" value="PEROXISOME BIOGENESIS PROTEIN 3-1"/>
    <property type="match status" value="1"/>
</dbReference>
<dbReference type="Pfam" id="PF04882">
    <property type="entry name" value="Peroxin-3"/>
    <property type="match status" value="1"/>
</dbReference>